<sequence>MTIKSDKWIRRMAQQHGMIEPFEPGQIRQDANGNKIVSYGTSSYGYDIRCAPEFKVFTNIHSTVVDPKNFDEKSFVDFHGDSCIIPPNSFALARTMEYFRIPRNVLTICLGKSTYARCGIIVNVTPFEPEWEGYVTLEFSNTTPLPAKIYAGEGCAQVLFFESDEECETSYKDRGGKYQGQVGVTLPRA</sequence>
<name>DCD_ALBFT</name>
<proteinExistence type="inferred from homology"/>
<gene>
    <name evidence="1" type="primary">dcd</name>
    <name type="ordered locus">Rfer_3293</name>
</gene>
<reference key="1">
    <citation type="submission" date="2006-02" db="EMBL/GenBank/DDBJ databases">
        <title>Complete sequence of chromosome of Rhodoferax ferrireducens DSM 15236.</title>
        <authorList>
            <person name="Copeland A."/>
            <person name="Lucas S."/>
            <person name="Lapidus A."/>
            <person name="Barry K."/>
            <person name="Detter J.C."/>
            <person name="Glavina del Rio T."/>
            <person name="Hammon N."/>
            <person name="Israni S."/>
            <person name="Pitluck S."/>
            <person name="Brettin T."/>
            <person name="Bruce D."/>
            <person name="Han C."/>
            <person name="Tapia R."/>
            <person name="Gilna P."/>
            <person name="Kiss H."/>
            <person name="Schmutz J."/>
            <person name="Larimer F."/>
            <person name="Land M."/>
            <person name="Kyrpides N."/>
            <person name="Ivanova N."/>
            <person name="Richardson P."/>
        </authorList>
    </citation>
    <scope>NUCLEOTIDE SEQUENCE [LARGE SCALE GENOMIC DNA]</scope>
    <source>
        <strain>ATCC BAA-621 / DSM 15236 / T118</strain>
    </source>
</reference>
<organism>
    <name type="scientific">Albidiferax ferrireducens (strain ATCC BAA-621 / DSM 15236 / T118)</name>
    <name type="common">Rhodoferax ferrireducens</name>
    <dbReference type="NCBI Taxonomy" id="338969"/>
    <lineage>
        <taxon>Bacteria</taxon>
        <taxon>Pseudomonadati</taxon>
        <taxon>Pseudomonadota</taxon>
        <taxon>Betaproteobacteria</taxon>
        <taxon>Burkholderiales</taxon>
        <taxon>Comamonadaceae</taxon>
        <taxon>Rhodoferax</taxon>
    </lineage>
</organism>
<protein>
    <recommendedName>
        <fullName evidence="1">dCTP deaminase</fullName>
        <ecNumber evidence="1">3.5.4.13</ecNumber>
    </recommendedName>
    <alternativeName>
        <fullName evidence="1">Deoxycytidine triphosphate deaminase</fullName>
    </alternativeName>
</protein>
<feature type="chain" id="PRO_1000009796" description="dCTP deaminase">
    <location>
        <begin position="1"/>
        <end position="189"/>
    </location>
</feature>
<feature type="active site" description="Proton donor/acceptor" evidence="1">
    <location>
        <position position="138"/>
    </location>
</feature>
<feature type="binding site" evidence="1">
    <location>
        <begin position="112"/>
        <end position="117"/>
    </location>
    <ligand>
        <name>dCTP</name>
        <dbReference type="ChEBI" id="CHEBI:61481"/>
    </ligand>
</feature>
<feature type="binding site" evidence="1">
    <location>
        <begin position="136"/>
        <end position="138"/>
    </location>
    <ligand>
        <name>dCTP</name>
        <dbReference type="ChEBI" id="CHEBI:61481"/>
    </ligand>
</feature>
<feature type="binding site" evidence="1">
    <location>
        <position position="157"/>
    </location>
    <ligand>
        <name>dCTP</name>
        <dbReference type="ChEBI" id="CHEBI:61481"/>
    </ligand>
</feature>
<feature type="binding site" evidence="1">
    <location>
        <position position="171"/>
    </location>
    <ligand>
        <name>dCTP</name>
        <dbReference type="ChEBI" id="CHEBI:61481"/>
    </ligand>
</feature>
<feature type="binding site" evidence="1">
    <location>
        <position position="181"/>
    </location>
    <ligand>
        <name>dCTP</name>
        <dbReference type="ChEBI" id="CHEBI:61481"/>
    </ligand>
</feature>
<evidence type="ECO:0000255" key="1">
    <source>
        <dbReference type="HAMAP-Rule" id="MF_00146"/>
    </source>
</evidence>
<keyword id="KW-0378">Hydrolase</keyword>
<keyword id="KW-0546">Nucleotide metabolism</keyword>
<keyword id="KW-0547">Nucleotide-binding</keyword>
<keyword id="KW-1185">Reference proteome</keyword>
<dbReference type="EC" id="3.5.4.13" evidence="1"/>
<dbReference type="EMBL" id="CP000267">
    <property type="protein sequence ID" value="ABD71002.1"/>
    <property type="molecule type" value="Genomic_DNA"/>
</dbReference>
<dbReference type="RefSeq" id="WP_011465565.1">
    <property type="nucleotide sequence ID" value="NC_007908.1"/>
</dbReference>
<dbReference type="SMR" id="Q21TA1"/>
<dbReference type="STRING" id="338969.Rfer_3293"/>
<dbReference type="KEGG" id="rfr:Rfer_3293"/>
<dbReference type="eggNOG" id="COG0717">
    <property type="taxonomic scope" value="Bacteria"/>
</dbReference>
<dbReference type="HOGENOM" id="CLU_087476_4_0_4"/>
<dbReference type="OrthoDB" id="9780956at2"/>
<dbReference type="UniPathway" id="UPA00610">
    <property type="reaction ID" value="UER00665"/>
</dbReference>
<dbReference type="Proteomes" id="UP000008332">
    <property type="component" value="Chromosome"/>
</dbReference>
<dbReference type="GO" id="GO:0008829">
    <property type="term" value="F:dCTP deaminase activity"/>
    <property type="evidence" value="ECO:0007669"/>
    <property type="project" value="UniProtKB-UniRule"/>
</dbReference>
<dbReference type="GO" id="GO:0000166">
    <property type="term" value="F:nucleotide binding"/>
    <property type="evidence" value="ECO:0007669"/>
    <property type="project" value="UniProtKB-KW"/>
</dbReference>
<dbReference type="GO" id="GO:0006226">
    <property type="term" value="P:dUMP biosynthetic process"/>
    <property type="evidence" value="ECO:0007669"/>
    <property type="project" value="UniProtKB-UniPathway"/>
</dbReference>
<dbReference type="GO" id="GO:0006229">
    <property type="term" value="P:dUTP biosynthetic process"/>
    <property type="evidence" value="ECO:0007669"/>
    <property type="project" value="UniProtKB-UniRule"/>
</dbReference>
<dbReference type="GO" id="GO:0015949">
    <property type="term" value="P:nucleobase-containing small molecule interconversion"/>
    <property type="evidence" value="ECO:0007669"/>
    <property type="project" value="TreeGrafter"/>
</dbReference>
<dbReference type="CDD" id="cd07557">
    <property type="entry name" value="trimeric_dUTPase"/>
    <property type="match status" value="1"/>
</dbReference>
<dbReference type="FunFam" id="2.70.40.10:FF:000001">
    <property type="entry name" value="dCTP deaminase"/>
    <property type="match status" value="1"/>
</dbReference>
<dbReference type="Gene3D" id="2.70.40.10">
    <property type="match status" value="1"/>
</dbReference>
<dbReference type="HAMAP" id="MF_00146">
    <property type="entry name" value="dCTP_deaminase"/>
    <property type="match status" value="1"/>
</dbReference>
<dbReference type="InterPro" id="IPR011962">
    <property type="entry name" value="dCTP_deaminase"/>
</dbReference>
<dbReference type="InterPro" id="IPR036157">
    <property type="entry name" value="dUTPase-like_sf"/>
</dbReference>
<dbReference type="InterPro" id="IPR033704">
    <property type="entry name" value="dUTPase_trimeric"/>
</dbReference>
<dbReference type="NCBIfam" id="TIGR02274">
    <property type="entry name" value="dCTP_deam"/>
    <property type="match status" value="1"/>
</dbReference>
<dbReference type="PANTHER" id="PTHR42680">
    <property type="entry name" value="DCTP DEAMINASE"/>
    <property type="match status" value="1"/>
</dbReference>
<dbReference type="PANTHER" id="PTHR42680:SF3">
    <property type="entry name" value="DCTP DEAMINASE"/>
    <property type="match status" value="1"/>
</dbReference>
<dbReference type="Pfam" id="PF22769">
    <property type="entry name" value="DCD"/>
    <property type="match status" value="1"/>
</dbReference>
<dbReference type="SUPFAM" id="SSF51283">
    <property type="entry name" value="dUTPase-like"/>
    <property type="match status" value="1"/>
</dbReference>
<accession>Q21TA1</accession>
<comment type="function">
    <text evidence="1">Catalyzes the deamination of dCTP to dUTP.</text>
</comment>
<comment type="catalytic activity">
    <reaction evidence="1">
        <text>dCTP + H2O + H(+) = dUTP + NH4(+)</text>
        <dbReference type="Rhea" id="RHEA:22680"/>
        <dbReference type="ChEBI" id="CHEBI:15377"/>
        <dbReference type="ChEBI" id="CHEBI:15378"/>
        <dbReference type="ChEBI" id="CHEBI:28938"/>
        <dbReference type="ChEBI" id="CHEBI:61481"/>
        <dbReference type="ChEBI" id="CHEBI:61555"/>
        <dbReference type="EC" id="3.5.4.13"/>
    </reaction>
</comment>
<comment type="pathway">
    <text evidence="1">Pyrimidine metabolism; dUMP biosynthesis; dUMP from dCTP (dUTP route): step 1/2.</text>
</comment>
<comment type="subunit">
    <text evidence="1">Homotrimer.</text>
</comment>
<comment type="similarity">
    <text evidence="1">Belongs to the dCTP deaminase family.</text>
</comment>